<comment type="function">
    <text evidence="6 7 8">Calcium/phospholipid-binding protein that plays a role in the plasmalemma repair mechanism of endothelial cells that permits rapid resealing of membranes disrupted by mechanical stress. Involved in endocytic recycling. Implicated in VEGF signal transduction by regulating the levels of the receptor KDR.</text>
</comment>
<comment type="cofactor">
    <cofactor evidence="4">
        <name>Ca(2+)</name>
        <dbReference type="ChEBI" id="CHEBI:29108"/>
    </cofactor>
    <text>Binds Ca(2+). The ions are bound to the C2 1 domain.</text>
</comment>
<comment type="subunit">
    <text evidence="2 7 9">Interacts with EHD1 (PubMed:21177873). Interacts with EHD2; the interaction is direct (PubMed:21177873). Interacts with DNM2 and KDR (PubMed:21177873). Interacts with RIPOR2 (By similarity).</text>
</comment>
<comment type="subcellular location">
    <subcellularLocation>
        <location evidence="1">Cell membrane</location>
        <topology evidence="1">Single-pass type II membrane protein</topology>
    </subcellularLocation>
    <subcellularLocation>
        <location evidence="1">Nucleus membrane</location>
        <topology evidence="1">Single-pass type II membrane protein</topology>
    </subcellularLocation>
    <subcellularLocation>
        <location evidence="1">Cytoplasmic vesicle membrane</location>
        <topology evidence="1">Single-pass type II membrane protein</topology>
    </subcellularLocation>
    <text evidence="1 6 7">Found at nuclear and plasma membranes. Enriched in undifferentiated myoblasts near the plasma membrane in puncate structures (By similarity). Concentrated at the membrane sites of both myoblast-myoblast and myoblast-myotube fusions. Detected at the plasmalemma in endothelial cells lining intact blood vessels.</text>
</comment>
<comment type="alternative products">
    <event type="alternative splicing"/>
    <isoform>
        <id>Q69ZN7-1</id>
        <name>1</name>
        <sequence type="displayed"/>
    </isoform>
    <isoform>
        <id>Q69ZN7-2</id>
        <name>2</name>
        <sequence type="described" ref="VSP_024015 VSP_024016 VSP_024017"/>
    </isoform>
    <isoform>
        <id>Q69ZN7-3</id>
        <name>3</name>
        <sequence type="described" ref="VSP_024013 VSP_024014"/>
    </isoform>
    <isoform>
        <id>Q69ZN7-4</id>
        <name>4</name>
        <sequence type="described" ref="VSP_035934"/>
    </isoform>
</comment>
<comment type="tissue specificity">
    <text evidence="6 7">Expressed in myoblasts (at protein level). Expressed in endothelial cells.</text>
</comment>
<comment type="induction">
    <text evidence="9">Up-regulated during myotube formation.</text>
</comment>
<comment type="domain">
    <text evidence="1">The C2 1 domain associates with lipid membranes in a calcium-dependent manner.</text>
</comment>
<comment type="miscellaneous">
    <text>Mice lacking Myof display fewer large multinucleated myotubes and are impaired in their ability to regenerate skeletal muscle after injury. They display a defective membrane repair in endothelial cells. They show also a delayed endocytic recycling.</text>
</comment>
<comment type="similarity">
    <text evidence="12">Belongs to the ferlin family.</text>
</comment>
<comment type="sequence caution" evidence="12">
    <conflict type="erroneous initiation">
        <sequence resource="EMBL-CDS" id="AAH25649"/>
    </conflict>
    <text>Extended N-terminus.</text>
</comment>
<comment type="sequence caution" evidence="12">
    <conflict type="frameshift">
        <sequence resource="EMBL-CDS" id="BAD32409"/>
    </conflict>
</comment>
<dbReference type="EMBL" id="AK173131">
    <property type="protein sequence ID" value="BAD32409.1"/>
    <property type="status" value="ALT_SEQ"/>
    <property type="molecule type" value="mRNA"/>
</dbReference>
<dbReference type="EMBL" id="AK031666">
    <property type="protein sequence ID" value="BAC27500.1"/>
    <property type="molecule type" value="mRNA"/>
</dbReference>
<dbReference type="EMBL" id="AK075903">
    <property type="protein sequence ID" value="BAC36043.1"/>
    <property type="molecule type" value="mRNA"/>
</dbReference>
<dbReference type="EMBL" id="AK086107">
    <property type="protein sequence ID" value="BAC39611.1"/>
    <property type="molecule type" value="mRNA"/>
</dbReference>
<dbReference type="EMBL" id="AK087176">
    <property type="protein sequence ID" value="BAC39820.2"/>
    <property type="molecule type" value="mRNA"/>
</dbReference>
<dbReference type="EMBL" id="AK087302">
    <property type="protein sequence ID" value="BAC39840.1"/>
    <property type="molecule type" value="mRNA"/>
</dbReference>
<dbReference type="EMBL" id="AC115360">
    <property type="status" value="NOT_ANNOTATED_CDS"/>
    <property type="molecule type" value="Genomic_DNA"/>
</dbReference>
<dbReference type="EMBL" id="BC025649">
    <property type="protein sequence ID" value="AAH25649.1"/>
    <property type="status" value="ALT_INIT"/>
    <property type="molecule type" value="mRNA"/>
</dbReference>
<dbReference type="EMBL" id="BC044825">
    <property type="protein sequence ID" value="AAH44825.1"/>
    <property type="molecule type" value="mRNA"/>
</dbReference>
<dbReference type="EMBL" id="BC055953">
    <property type="protein sequence ID" value="AAH55953.1"/>
    <property type="molecule type" value="mRNA"/>
</dbReference>
<dbReference type="CCDS" id="CCDS37970.1">
    <molecule id="Q69ZN7-1"/>
</dbReference>
<dbReference type="RefSeq" id="NP_001093104.1">
    <molecule id="Q69ZN7-1"/>
    <property type="nucleotide sequence ID" value="NM_001099634.1"/>
</dbReference>
<dbReference type="RefSeq" id="NP_001289069.1">
    <property type="nucleotide sequence ID" value="NM_001302140.1"/>
</dbReference>
<dbReference type="SMR" id="Q69ZN7"/>
<dbReference type="BioGRID" id="230471">
    <property type="interactions" value="8"/>
</dbReference>
<dbReference type="FunCoup" id="Q69ZN7">
    <property type="interactions" value="348"/>
</dbReference>
<dbReference type="IntAct" id="Q69ZN7">
    <property type="interactions" value="2"/>
</dbReference>
<dbReference type="STRING" id="10090.ENSMUSP00000045036"/>
<dbReference type="GlyGen" id="Q69ZN7">
    <property type="glycosylation" value="1 site, 1 O-linked glycan (1 site)"/>
</dbReference>
<dbReference type="iPTMnet" id="Q69ZN7"/>
<dbReference type="PhosphoSitePlus" id="Q69ZN7"/>
<dbReference type="SwissPalm" id="Q69ZN7"/>
<dbReference type="jPOST" id="Q69ZN7"/>
<dbReference type="PaxDb" id="10090-ENSMUSP00000045036"/>
<dbReference type="PeptideAtlas" id="Q69ZN7"/>
<dbReference type="ProteomicsDB" id="286109">
    <molecule id="Q69ZN7-1"/>
</dbReference>
<dbReference type="ProteomicsDB" id="286110">
    <molecule id="Q69ZN7-2"/>
</dbReference>
<dbReference type="ProteomicsDB" id="286111">
    <molecule id="Q69ZN7-3"/>
</dbReference>
<dbReference type="ProteomicsDB" id="286112">
    <molecule id="Q69ZN7-4"/>
</dbReference>
<dbReference type="Pumba" id="Q69ZN7"/>
<dbReference type="Antibodypedia" id="2467">
    <property type="antibodies" value="96 antibodies from 28 providers"/>
</dbReference>
<dbReference type="DNASU" id="226101"/>
<dbReference type="Ensembl" id="ENSMUST00000041475.16">
    <molecule id="Q69ZN7-1"/>
    <property type="protein sequence ID" value="ENSMUSP00000045036.9"/>
    <property type="gene ID" value="ENSMUSG00000048612.17"/>
</dbReference>
<dbReference type="GeneID" id="226101"/>
<dbReference type="KEGG" id="mmu:226101"/>
<dbReference type="UCSC" id="uc008hit.1">
    <molecule id="Q69ZN7-1"/>
    <property type="organism name" value="mouse"/>
</dbReference>
<dbReference type="AGR" id="MGI:1919192"/>
<dbReference type="CTD" id="26509"/>
<dbReference type="MGI" id="MGI:1919192">
    <property type="gene designation" value="Myof"/>
</dbReference>
<dbReference type="VEuPathDB" id="HostDB:ENSMUSG00000048612"/>
<dbReference type="eggNOG" id="KOG1326">
    <property type="taxonomic scope" value="Eukaryota"/>
</dbReference>
<dbReference type="GeneTree" id="ENSGT00940000154741"/>
<dbReference type="HOGENOM" id="CLU_001183_2_1_1"/>
<dbReference type="InParanoid" id="Q69ZN7"/>
<dbReference type="OMA" id="TCLEFRV"/>
<dbReference type="OrthoDB" id="270970at2759"/>
<dbReference type="PhylomeDB" id="Q69ZN7"/>
<dbReference type="TreeFam" id="TF316871"/>
<dbReference type="BioGRID-ORCS" id="226101">
    <property type="hits" value="1 hit in 77 CRISPR screens"/>
</dbReference>
<dbReference type="ChiTaRS" id="Myof">
    <property type="organism name" value="mouse"/>
</dbReference>
<dbReference type="PRO" id="PR:Q69ZN7"/>
<dbReference type="Proteomes" id="UP000000589">
    <property type="component" value="Chromosome 19"/>
</dbReference>
<dbReference type="RNAct" id="Q69ZN7">
    <property type="molecule type" value="protein"/>
</dbReference>
<dbReference type="Bgee" id="ENSMUSG00000048612">
    <property type="expression patterns" value="Expressed in urinary bladder urothelium and 169 other cell types or tissues"/>
</dbReference>
<dbReference type="ExpressionAtlas" id="Q69ZN7">
    <property type="expression patterns" value="baseline and differential"/>
</dbReference>
<dbReference type="GO" id="GO:0005901">
    <property type="term" value="C:caveola"/>
    <property type="evidence" value="ECO:0000314"/>
    <property type="project" value="UniProtKB"/>
</dbReference>
<dbReference type="GO" id="GO:0030659">
    <property type="term" value="C:cytoplasmic vesicle membrane"/>
    <property type="evidence" value="ECO:0007669"/>
    <property type="project" value="UniProtKB-SubCell"/>
</dbReference>
<dbReference type="GO" id="GO:0031965">
    <property type="term" value="C:nuclear membrane"/>
    <property type="evidence" value="ECO:0007669"/>
    <property type="project" value="UniProtKB-SubCell"/>
</dbReference>
<dbReference type="GO" id="GO:0046872">
    <property type="term" value="F:metal ion binding"/>
    <property type="evidence" value="ECO:0007669"/>
    <property type="project" value="UniProtKB-KW"/>
</dbReference>
<dbReference type="GO" id="GO:0005543">
    <property type="term" value="F:phospholipid binding"/>
    <property type="evidence" value="ECO:0000315"/>
    <property type="project" value="UniProtKB"/>
</dbReference>
<dbReference type="GO" id="GO:0034605">
    <property type="term" value="P:cellular response to heat"/>
    <property type="evidence" value="ECO:0000314"/>
    <property type="project" value="MGI"/>
</dbReference>
<dbReference type="GO" id="GO:0006071">
    <property type="term" value="P:glycerol metabolic process"/>
    <property type="evidence" value="ECO:0000316"/>
    <property type="project" value="MGI"/>
</dbReference>
<dbReference type="GO" id="GO:0055001">
    <property type="term" value="P:muscle cell development"/>
    <property type="evidence" value="ECO:0000316"/>
    <property type="project" value="MGI"/>
</dbReference>
<dbReference type="GO" id="GO:0001778">
    <property type="term" value="P:plasma membrane repair"/>
    <property type="evidence" value="ECO:0000315"/>
    <property type="project" value="UniProtKB"/>
</dbReference>
<dbReference type="GO" id="GO:0030947">
    <property type="term" value="P:regulation of vascular endothelial growth factor receptor signaling pathway"/>
    <property type="evidence" value="ECO:0000315"/>
    <property type="project" value="UniProtKB"/>
</dbReference>
<dbReference type="GO" id="GO:0033292">
    <property type="term" value="P:T-tubule organization"/>
    <property type="evidence" value="ECO:0000316"/>
    <property type="project" value="MGI"/>
</dbReference>
<dbReference type="CDD" id="cd08373">
    <property type="entry name" value="C2A_Ferlin"/>
    <property type="match status" value="1"/>
</dbReference>
<dbReference type="CDD" id="cd04011">
    <property type="entry name" value="C2B_Ferlin"/>
    <property type="match status" value="1"/>
</dbReference>
<dbReference type="CDD" id="cd04018">
    <property type="entry name" value="C2C_Ferlin"/>
    <property type="match status" value="1"/>
</dbReference>
<dbReference type="CDD" id="cd04017">
    <property type="entry name" value="C2D_Ferlin"/>
    <property type="match status" value="1"/>
</dbReference>
<dbReference type="CDD" id="cd04037">
    <property type="entry name" value="C2E_Ferlin"/>
    <property type="match status" value="1"/>
</dbReference>
<dbReference type="CDD" id="cd08374">
    <property type="entry name" value="C2F_Ferlin"/>
    <property type="match status" value="1"/>
</dbReference>
<dbReference type="FunFam" id="2.60.40.150:FF:000009">
    <property type="entry name" value="dysferlin isoform X2"/>
    <property type="match status" value="1"/>
</dbReference>
<dbReference type="FunFam" id="2.60.40.150:FF:000021">
    <property type="entry name" value="dysferlin isoform X2"/>
    <property type="match status" value="1"/>
</dbReference>
<dbReference type="FunFam" id="2.60.40.150:FF:000026">
    <property type="entry name" value="dysferlin isoform X2"/>
    <property type="match status" value="1"/>
</dbReference>
<dbReference type="FunFam" id="2.60.40.150:FF:000033">
    <property type="entry name" value="dysferlin isoform X2"/>
    <property type="match status" value="1"/>
</dbReference>
<dbReference type="FunFam" id="2.60.40.150:FF:000037">
    <property type="entry name" value="dysferlin isoform X2"/>
    <property type="match status" value="1"/>
</dbReference>
<dbReference type="FunFam" id="2.60.40.150:FF:000095">
    <property type="entry name" value="myoferlin isoform X2"/>
    <property type="match status" value="1"/>
</dbReference>
<dbReference type="Gene3D" id="2.60.40.150">
    <property type="entry name" value="C2 domain"/>
    <property type="match status" value="6"/>
</dbReference>
<dbReference type="InterPro" id="IPR000008">
    <property type="entry name" value="C2_dom"/>
</dbReference>
<dbReference type="InterPro" id="IPR035892">
    <property type="entry name" value="C2_domain_sf"/>
</dbReference>
<dbReference type="InterPro" id="IPR037726">
    <property type="entry name" value="C2A_Ferlin"/>
</dbReference>
<dbReference type="InterPro" id="IPR037720">
    <property type="entry name" value="C2B_Ferlin"/>
</dbReference>
<dbReference type="InterPro" id="IPR037722">
    <property type="entry name" value="C2C_Ferlin"/>
</dbReference>
<dbReference type="InterPro" id="IPR037723">
    <property type="entry name" value="C2D_Ferlin"/>
</dbReference>
<dbReference type="InterPro" id="IPR037724">
    <property type="entry name" value="C2E_Ferlin"/>
</dbReference>
<dbReference type="InterPro" id="IPR037725">
    <property type="entry name" value="C2F_Ferlin"/>
</dbReference>
<dbReference type="InterPro" id="IPR012968">
    <property type="entry name" value="FerIin_dom"/>
</dbReference>
<dbReference type="InterPro" id="IPR037721">
    <property type="entry name" value="Ferlin"/>
</dbReference>
<dbReference type="InterPro" id="IPR012560">
    <property type="entry name" value="Ferlin_A-domain"/>
</dbReference>
<dbReference type="InterPro" id="IPR012561">
    <property type="entry name" value="Ferlin_B-domain"/>
</dbReference>
<dbReference type="InterPro" id="IPR032362">
    <property type="entry name" value="Ferlin_C"/>
</dbReference>
<dbReference type="InterPro" id="IPR055072">
    <property type="entry name" value="Ferlin_DSRM"/>
</dbReference>
<dbReference type="InterPro" id="IPR006614">
    <property type="entry name" value="Peroxin/Ferlin"/>
</dbReference>
<dbReference type="PANTHER" id="PTHR12546">
    <property type="entry name" value="FER-1-LIKE"/>
    <property type="match status" value="1"/>
</dbReference>
<dbReference type="PANTHER" id="PTHR12546:SF33">
    <property type="entry name" value="SPERM VESICLE FUSION PROTEIN FER-1"/>
    <property type="match status" value="1"/>
</dbReference>
<dbReference type="Pfam" id="PF00168">
    <property type="entry name" value="C2"/>
    <property type="match status" value="7"/>
</dbReference>
<dbReference type="Pfam" id="PF22901">
    <property type="entry name" value="dsrm_Ferlin"/>
    <property type="match status" value="1"/>
</dbReference>
<dbReference type="Pfam" id="PF08165">
    <property type="entry name" value="FerA"/>
    <property type="match status" value="1"/>
</dbReference>
<dbReference type="Pfam" id="PF08150">
    <property type="entry name" value="FerB"/>
    <property type="match status" value="1"/>
</dbReference>
<dbReference type="Pfam" id="PF08151">
    <property type="entry name" value="FerI"/>
    <property type="match status" value="1"/>
</dbReference>
<dbReference type="Pfam" id="PF16165">
    <property type="entry name" value="Ferlin_C"/>
    <property type="match status" value="1"/>
</dbReference>
<dbReference type="SMART" id="SM00239">
    <property type="entry name" value="C2"/>
    <property type="match status" value="7"/>
</dbReference>
<dbReference type="SMART" id="SM00694">
    <property type="entry name" value="DysFC"/>
    <property type="match status" value="2"/>
</dbReference>
<dbReference type="SMART" id="SM00693">
    <property type="entry name" value="DysFN"/>
    <property type="match status" value="2"/>
</dbReference>
<dbReference type="SMART" id="SM01200">
    <property type="entry name" value="FerA"/>
    <property type="match status" value="1"/>
</dbReference>
<dbReference type="SMART" id="SM01201">
    <property type="entry name" value="FerB"/>
    <property type="match status" value="1"/>
</dbReference>
<dbReference type="SMART" id="SM01202">
    <property type="entry name" value="FerI"/>
    <property type="match status" value="1"/>
</dbReference>
<dbReference type="SUPFAM" id="SSF49562">
    <property type="entry name" value="C2 domain (Calcium/lipid-binding domain, CaLB)"/>
    <property type="match status" value="7"/>
</dbReference>
<dbReference type="PROSITE" id="PS50004">
    <property type="entry name" value="C2"/>
    <property type="match status" value="7"/>
</dbReference>
<reference key="1">
    <citation type="journal article" date="2004" name="DNA Res.">
        <title>Prediction of the coding sequences of mouse homologues of KIAA gene: IV. The complete nucleotide sequences of 500 mouse KIAA-homologous cDNAs identified by screening of terminal sequences of cDNA clones randomly sampled from size-fractionated libraries.</title>
        <authorList>
            <person name="Okazaki N."/>
            <person name="Kikuno R."/>
            <person name="Ohara R."/>
            <person name="Inamoto S."/>
            <person name="Koseki H."/>
            <person name="Hiraoka S."/>
            <person name="Saga Y."/>
            <person name="Seino S."/>
            <person name="Nishimura M."/>
            <person name="Kaisho T."/>
            <person name="Hoshino K."/>
            <person name="Kitamura H."/>
            <person name="Nagase T."/>
            <person name="Ohara O."/>
            <person name="Koga H."/>
        </authorList>
    </citation>
    <scope>NUCLEOTIDE SEQUENCE [LARGE SCALE MRNA] (ISOFORM 1)</scope>
    <source>
        <tissue>Pancreatic islet</tissue>
    </source>
</reference>
<reference key="2">
    <citation type="journal article" date="2005" name="Science">
        <title>The transcriptional landscape of the mammalian genome.</title>
        <authorList>
            <person name="Carninci P."/>
            <person name="Kasukawa T."/>
            <person name="Katayama S."/>
            <person name="Gough J."/>
            <person name="Frith M.C."/>
            <person name="Maeda N."/>
            <person name="Oyama R."/>
            <person name="Ravasi T."/>
            <person name="Lenhard B."/>
            <person name="Wells C."/>
            <person name="Kodzius R."/>
            <person name="Shimokawa K."/>
            <person name="Bajic V.B."/>
            <person name="Brenner S.E."/>
            <person name="Batalov S."/>
            <person name="Forrest A.R."/>
            <person name="Zavolan M."/>
            <person name="Davis M.J."/>
            <person name="Wilming L.G."/>
            <person name="Aidinis V."/>
            <person name="Allen J.E."/>
            <person name="Ambesi-Impiombato A."/>
            <person name="Apweiler R."/>
            <person name="Aturaliya R.N."/>
            <person name="Bailey T.L."/>
            <person name="Bansal M."/>
            <person name="Baxter L."/>
            <person name="Beisel K.W."/>
            <person name="Bersano T."/>
            <person name="Bono H."/>
            <person name="Chalk A.M."/>
            <person name="Chiu K.P."/>
            <person name="Choudhary V."/>
            <person name="Christoffels A."/>
            <person name="Clutterbuck D.R."/>
            <person name="Crowe M.L."/>
            <person name="Dalla E."/>
            <person name="Dalrymple B.P."/>
            <person name="de Bono B."/>
            <person name="Della Gatta G."/>
            <person name="di Bernardo D."/>
            <person name="Down T."/>
            <person name="Engstrom P."/>
            <person name="Fagiolini M."/>
            <person name="Faulkner G."/>
            <person name="Fletcher C.F."/>
            <person name="Fukushima T."/>
            <person name="Furuno M."/>
            <person name="Futaki S."/>
            <person name="Gariboldi M."/>
            <person name="Georgii-Hemming P."/>
            <person name="Gingeras T.R."/>
            <person name="Gojobori T."/>
            <person name="Green R.E."/>
            <person name="Gustincich S."/>
            <person name="Harbers M."/>
            <person name="Hayashi Y."/>
            <person name="Hensch T.K."/>
            <person name="Hirokawa N."/>
            <person name="Hill D."/>
            <person name="Huminiecki L."/>
            <person name="Iacono M."/>
            <person name="Ikeo K."/>
            <person name="Iwama A."/>
            <person name="Ishikawa T."/>
            <person name="Jakt M."/>
            <person name="Kanapin A."/>
            <person name="Katoh M."/>
            <person name="Kawasawa Y."/>
            <person name="Kelso J."/>
            <person name="Kitamura H."/>
            <person name="Kitano H."/>
            <person name="Kollias G."/>
            <person name="Krishnan S.P."/>
            <person name="Kruger A."/>
            <person name="Kummerfeld S.K."/>
            <person name="Kurochkin I.V."/>
            <person name="Lareau L.F."/>
            <person name="Lazarevic D."/>
            <person name="Lipovich L."/>
            <person name="Liu J."/>
            <person name="Liuni S."/>
            <person name="McWilliam S."/>
            <person name="Madan Babu M."/>
            <person name="Madera M."/>
            <person name="Marchionni L."/>
            <person name="Matsuda H."/>
            <person name="Matsuzawa S."/>
            <person name="Miki H."/>
            <person name="Mignone F."/>
            <person name="Miyake S."/>
            <person name="Morris K."/>
            <person name="Mottagui-Tabar S."/>
            <person name="Mulder N."/>
            <person name="Nakano N."/>
            <person name="Nakauchi H."/>
            <person name="Ng P."/>
            <person name="Nilsson R."/>
            <person name="Nishiguchi S."/>
            <person name="Nishikawa S."/>
            <person name="Nori F."/>
            <person name="Ohara O."/>
            <person name="Okazaki Y."/>
            <person name="Orlando V."/>
            <person name="Pang K.C."/>
            <person name="Pavan W.J."/>
            <person name="Pavesi G."/>
            <person name="Pesole G."/>
            <person name="Petrovsky N."/>
            <person name="Piazza S."/>
            <person name="Reed J."/>
            <person name="Reid J.F."/>
            <person name="Ring B.Z."/>
            <person name="Ringwald M."/>
            <person name="Rost B."/>
            <person name="Ruan Y."/>
            <person name="Salzberg S.L."/>
            <person name="Sandelin A."/>
            <person name="Schneider C."/>
            <person name="Schoenbach C."/>
            <person name="Sekiguchi K."/>
            <person name="Semple C.A."/>
            <person name="Seno S."/>
            <person name="Sessa L."/>
            <person name="Sheng Y."/>
            <person name="Shibata Y."/>
            <person name="Shimada H."/>
            <person name="Shimada K."/>
            <person name="Silva D."/>
            <person name="Sinclair B."/>
            <person name="Sperling S."/>
            <person name="Stupka E."/>
            <person name="Sugiura K."/>
            <person name="Sultana R."/>
            <person name="Takenaka Y."/>
            <person name="Taki K."/>
            <person name="Tammoja K."/>
            <person name="Tan S.L."/>
            <person name="Tang S."/>
            <person name="Taylor M.S."/>
            <person name="Tegner J."/>
            <person name="Teichmann S.A."/>
            <person name="Ueda H.R."/>
            <person name="van Nimwegen E."/>
            <person name="Verardo R."/>
            <person name="Wei C.L."/>
            <person name="Yagi K."/>
            <person name="Yamanishi H."/>
            <person name="Zabarovsky E."/>
            <person name="Zhu S."/>
            <person name="Zimmer A."/>
            <person name="Hide W."/>
            <person name="Bult C."/>
            <person name="Grimmond S.M."/>
            <person name="Teasdale R.D."/>
            <person name="Liu E.T."/>
            <person name="Brusic V."/>
            <person name="Quackenbush J."/>
            <person name="Wahlestedt C."/>
            <person name="Mattick J.S."/>
            <person name="Hume D.A."/>
            <person name="Kai C."/>
            <person name="Sasaki D."/>
            <person name="Tomaru Y."/>
            <person name="Fukuda S."/>
            <person name="Kanamori-Katayama M."/>
            <person name="Suzuki M."/>
            <person name="Aoki J."/>
            <person name="Arakawa T."/>
            <person name="Iida J."/>
            <person name="Imamura K."/>
            <person name="Itoh M."/>
            <person name="Kato T."/>
            <person name="Kawaji H."/>
            <person name="Kawagashira N."/>
            <person name="Kawashima T."/>
            <person name="Kojima M."/>
            <person name="Kondo S."/>
            <person name="Konno H."/>
            <person name="Nakano K."/>
            <person name="Ninomiya N."/>
            <person name="Nishio T."/>
            <person name="Okada M."/>
            <person name="Plessy C."/>
            <person name="Shibata K."/>
            <person name="Shiraki T."/>
            <person name="Suzuki S."/>
            <person name="Tagami M."/>
            <person name="Waki K."/>
            <person name="Watahiki A."/>
            <person name="Okamura-Oho Y."/>
            <person name="Suzuki H."/>
            <person name="Kawai J."/>
            <person name="Hayashizaki Y."/>
        </authorList>
    </citation>
    <scope>NUCLEOTIDE SEQUENCE [LARGE SCALE MRNA] (ISOFORMS 2 AND 3)</scope>
    <scope>NUCLEOTIDE SEQUENCE [LARGE SCALE MRNA] OF 1322-2048 (ISOFORMS 1/2/3)</scope>
    <source>
        <strain>C57BL/6J</strain>
        <strain>FVB/N</strain>
        <tissue>Embryonic head</tissue>
        <tissue>Embryonic lung</tissue>
        <tissue>Embryonic testis</tissue>
        <tissue>Tongue</tissue>
    </source>
</reference>
<reference key="3">
    <citation type="journal article" date="2009" name="PLoS Biol.">
        <title>Lineage-specific biology revealed by a finished genome assembly of the mouse.</title>
        <authorList>
            <person name="Church D.M."/>
            <person name="Goodstadt L."/>
            <person name="Hillier L.W."/>
            <person name="Zody M.C."/>
            <person name="Goldstein S."/>
            <person name="She X."/>
            <person name="Bult C.J."/>
            <person name="Agarwala R."/>
            <person name="Cherry J.L."/>
            <person name="DiCuccio M."/>
            <person name="Hlavina W."/>
            <person name="Kapustin Y."/>
            <person name="Meric P."/>
            <person name="Maglott D."/>
            <person name="Birtle Z."/>
            <person name="Marques A.C."/>
            <person name="Graves T."/>
            <person name="Zhou S."/>
            <person name="Teague B."/>
            <person name="Potamousis K."/>
            <person name="Churas C."/>
            <person name="Place M."/>
            <person name="Herschleb J."/>
            <person name="Runnheim R."/>
            <person name="Forrest D."/>
            <person name="Amos-Landgraf J."/>
            <person name="Schwartz D.C."/>
            <person name="Cheng Z."/>
            <person name="Lindblad-Toh K."/>
            <person name="Eichler E.E."/>
            <person name="Ponting C.P."/>
        </authorList>
    </citation>
    <scope>NUCLEOTIDE SEQUENCE [LARGE SCALE GENOMIC DNA]</scope>
    <source>
        <strain>C57BL/6J</strain>
    </source>
</reference>
<reference key="4">
    <citation type="journal article" date="2004" name="Genome Res.">
        <title>The status, quality, and expansion of the NIH full-length cDNA project: the Mammalian Gene Collection (MGC).</title>
        <authorList>
            <consortium name="The MGC Project Team"/>
        </authorList>
    </citation>
    <scope>NUCLEOTIDE SEQUENCE [LARGE SCALE MRNA] OF 517-2048 (ISOFORM 4)</scope>
    <scope>NUCLEOTIDE SEQUENCE [LARGE SCALE MRNA] OF 968-2048 (ISOFORMS 1/2/3)</scope>
    <source>
        <strain>FVB/N</strain>
        <tissue>Mammary tumor</tissue>
    </source>
</reference>
<reference key="5">
    <citation type="journal article" date="2005" name="Development">
        <title>Normal myoblast fusion requires myoferlin.</title>
        <authorList>
            <person name="Doherty K.R."/>
            <person name="Cave A."/>
            <person name="Davis D.B."/>
            <person name="Delmonte A.J."/>
            <person name="Posey A."/>
            <person name="Earley J.U."/>
            <person name="Hadhazy M."/>
            <person name="McNally E.M."/>
        </authorList>
    </citation>
    <scope>FUNCTION</scope>
    <scope>MUTAGENESIS OF ILE-67</scope>
    <scope>SUBCELLULAR LOCATION</scope>
    <scope>TISSUE SPECIFICITY</scope>
</reference>
<reference key="6">
    <citation type="journal article" date="2007" name="J. Biol. Chem.">
        <title>Myoferlin regulates vascular endothelial growth factor receptor-2 stability and function.</title>
        <authorList>
            <person name="Bernatchez P.N."/>
            <person name="Acevedo L."/>
            <person name="Fernandez-Hernando C."/>
            <person name="Murata T."/>
            <person name="Chalouni C."/>
            <person name="Kim J."/>
            <person name="Erdjument-Bromage H."/>
            <person name="Shah V."/>
            <person name="Gratton J.-P."/>
            <person name="McNally E.M."/>
            <person name="Tempst P."/>
            <person name="Sessa W.C."/>
        </authorList>
    </citation>
    <scope>FUNCTION</scope>
    <scope>INTERACTION WITH DNM2 AND KDR</scope>
    <scope>SUBCELLULAR LOCATION</scope>
    <scope>TISSUE SPECIFICITY</scope>
</reference>
<reference key="7">
    <citation type="journal article" date="2008" name="J. Biol. Chem.">
        <title>The endocytic recycling protein EHD2 interacts with myoferlin to regulate myoblast fusion.</title>
        <authorList>
            <person name="Doherty K.R."/>
            <person name="Demonbreun A.R."/>
            <person name="Wallace G.Q."/>
            <person name="Cave A."/>
            <person name="Posey A.D."/>
            <person name="Heretis K."/>
            <person name="Pytel P."/>
            <person name="McNally E.M."/>
        </authorList>
    </citation>
    <scope>FUNCTION</scope>
</reference>
<reference key="8">
    <citation type="journal article" date="2009" name="Immunity">
        <title>The phagosomal proteome in interferon-gamma-activated macrophages.</title>
        <authorList>
            <person name="Trost M."/>
            <person name="English L."/>
            <person name="Lemieux S."/>
            <person name="Courcelles M."/>
            <person name="Desjardins M."/>
            <person name="Thibault P."/>
        </authorList>
    </citation>
    <scope>IDENTIFICATION BY MASS SPECTROMETRY [LARGE SCALE ANALYSIS]</scope>
</reference>
<reference key="9">
    <citation type="journal article" date="2009" name="Mol. Cell. Proteomics">
        <title>Large scale localization of protein phosphorylation by use of electron capture dissociation mass spectrometry.</title>
        <authorList>
            <person name="Sweet S.M."/>
            <person name="Bailey C.M."/>
            <person name="Cunningham D.L."/>
            <person name="Heath J.K."/>
            <person name="Cooper H.J."/>
        </authorList>
    </citation>
    <scope>PHOSPHORYLATION [LARGE SCALE ANALYSIS] AT SER-174</scope>
    <scope>IDENTIFICATION BY MASS SPECTROMETRY [LARGE SCALE ANALYSIS]</scope>
    <source>
        <tissue>Embryonic fibroblast</tissue>
    </source>
</reference>
<reference key="10">
    <citation type="journal article" date="2010" name="Cell">
        <title>A tissue-specific atlas of mouse protein phosphorylation and expression.</title>
        <authorList>
            <person name="Huttlin E.L."/>
            <person name="Jedrychowski M.P."/>
            <person name="Elias J.E."/>
            <person name="Goswami T."/>
            <person name="Rad R."/>
            <person name="Beausoleil S.A."/>
            <person name="Villen J."/>
            <person name="Haas W."/>
            <person name="Sowa M.E."/>
            <person name="Gygi S.P."/>
        </authorList>
    </citation>
    <scope>PHOSPHORYLATION [LARGE SCALE ANALYSIS] AT SER-170 AND SER-174</scope>
    <scope>IDENTIFICATION BY MASS SPECTROMETRY [LARGE SCALE ANALYSIS]</scope>
    <source>
        <tissue>Brown adipose tissue</tissue>
        <tissue>Heart</tissue>
        <tissue>Kidney</tissue>
        <tissue>Liver</tissue>
        <tissue>Lung</tissue>
        <tissue>Pancreas</tissue>
        <tissue>Spleen</tissue>
        <tissue>Testis</tissue>
    </source>
</reference>
<reference key="11">
    <citation type="journal article" date="2011" name="J. Biol. Chem.">
        <title>Endocytic recycling proteins EHD1 and EHD2 interact with fer-1-like-5 (Fer1L5) and mediate myoblast fusion.</title>
        <authorList>
            <person name="Posey A.D. Jr."/>
            <person name="Pytel P."/>
            <person name="Gardikiotes K."/>
            <person name="Demonbreun A.R."/>
            <person name="Rainey M."/>
            <person name="George M."/>
            <person name="Band H."/>
            <person name="McNally E.M."/>
        </authorList>
    </citation>
    <scope>INTERACTION WITH EHD1 AND EHD2</scope>
    <scope>INDUCTION</scope>
</reference>
<reference key="12">
    <citation type="journal article" date="2013" name="Mol. Cell">
        <title>SIRT5-mediated lysine desuccinylation impacts diverse metabolic pathways.</title>
        <authorList>
            <person name="Park J."/>
            <person name="Chen Y."/>
            <person name="Tishkoff D.X."/>
            <person name="Peng C."/>
            <person name="Tan M."/>
            <person name="Dai L."/>
            <person name="Xie Z."/>
            <person name="Zhang Y."/>
            <person name="Zwaans B.M."/>
            <person name="Skinner M.E."/>
            <person name="Lombard D.B."/>
            <person name="Zhao Y."/>
        </authorList>
    </citation>
    <scope>ACETYLATION [LARGE SCALE ANALYSIS] AT LYS-540 AND LYS-1494</scope>
    <scope>IDENTIFICATION BY MASS SPECTROMETRY [LARGE SCALE ANALYSIS]</scope>
    <source>
        <tissue>Embryonic fibroblast</tissue>
    </source>
</reference>
<accession>Q69ZN7</accession>
<accession>Q7TMG0</accession>
<accession>Q80V33</accession>
<accession>Q8BU64</accession>
<accession>Q8BU70</accession>
<accession>Q8BUC1</accession>
<accession>Q8BVY6</accession>
<accession>Q8C0D1</accession>
<accession>Q8R3B4</accession>
<sequence length="2048" mass="233324">MLRVIVESATNIPKTKFGKPDPIVSVIFKDEKKKTKKVDNELNPVWNEILEFDLRGIPLDSSSSLVIVVKDFETIGQNKLIGTATVSLKDLIGDQNRSLPYKQTSLLNEKGQDTGATIDLVIGYTPPSAPHPNDPSGTSVPGMGEEEEEDQGDEDRVDGIVRGPGPKGPSGTVSEAQLARRITKGKSSRRMLSNKPQDFQIRVRVIEGRQLCGNNIRPVVKVHICGQTHRTRIKRGNNPFFDELFFYNVHITPSELMDEIISIRVYNSHSLRADCLMGEFKIDVGFVYDEPGHAVMRKWLLLNDPEDTSSGAKGYMKVSMFVLGTGDEPPPEKRDRDNDSDDVESNLLLPAGIALRWVTFMLKIYRAEDIPQMDDAFSQTVKEIFGGNADKKNLVDPFVEVSFAGKKVCTNIIERNANPEWNQVVNLQIKFPSMCEKIKLTVYDWDRLTKNDVVGTTYLYLSKIAASGGEVEATTGETEVGFVPTFGPCYLNLYGSPREYTGFPDPYDELNSGKGEGVAYRGRIFVELNTFLEKKPPEKKLEPISSDDLLVVEKYQRRRKYSLSAVFHSATMLQDVGEAIQFEVSIGNYGNKFDATCKPLASTTQYSRAVFDGNYYYYLPWAHTKPVVTLTSYWEDISHRLDAVNTLLVMAERLQSNIEAVKSGIQGKIPANQLAEVWLKLIDEVIEDTRYTLPVTEGKANVTVLDTQIRKLRSRFLSQIHEAALRMRSEATDVKSTLLEIEEWLDKLMQLTEEPQNSMPDIIIWMIRGEKRLAYARIPAHQVLYSTSGGNASGKYCGKTQTILLKYPQEKTNGPKVPVELRVNIWLGLSAVEKKFNSFAEGTFTVFAEMYENQALVFGKWGTSGLVGRHKFSDVTGKIKLKREFFLPPKGWEWEGDWVVDPERSLLTEADAGHTEFTDEVYQNENRYPGGEWKQAEDTYTDANGDKAASPSEMTCPPGWEWEDDAWIYDINRAVDEKGWEYGITIPPDNKPKSWVAAEKMYHTHRRRRLVRKRKKDLTQTASSTARAMEELEDREGWEYASLIGWKFHWKQRSSDTFRRRRWRRKMAPSETHGAAAIFKLEGALGADTTEDGEEKGPEKQKHSATTVFGANTPIVSCNFDRVYIYHLRCYIYQARNLMALDKDSFSDPYAHVSFLHRSKTTEIIHSTLNPTWDQTIIFDEVEIFGEPQTVLQNPPNVTIELFDNDQVGKDEFLGRSICSPLVKLNSETDITPKLLWHPVMNGDKACGDVLVTAELILRNKDGSNLPILPSQRAPNLYMVPQGIRPVVQLTAIEILAWGLRNMKNYQMASVTSPSLVVECGGERVESVVIKSLKKTPNFPSSVLFMKVFLPKEELYMPPLVIKVIDHRQFGRKPVVGQCTIDHLDRFRCDPYAGKEDIVPQLKASLMSAPPCREVVIEIEDTKPLLASKLSEKEEEIVDWWSKFYASSGEHEKCGQYIQKGYSKLKIYDCELEDVADFEGLTDFSDTFKLYRGKSDENEDPSVVGEFKGSFRIYPLPDDPSVPAPPRQFRELPDSVPQECTVRIYIVQGLQLQPQDNNGLCDPYIKITLGKKVIEDRDHYIPNTLNPVFGRMYELSCYLPQEKDLKISVYDYDTFTRDEKVGETTIDLENRFLSRFGSHCGIPEQYCVSGVNTWRDQLRPTQLLQNVARFKGFPPPVLSEDGSRIRYGGRDYHLDEFEANKILHQHLGAPEERLALHILRTQGLVPEHVETRTLHSTFQPNISQGKLQMWVDVFPKSLGPPGPPFNITPRKAKKYYLRVIIWNTKDVILDEKSITGEDMSDIYVKGWISGSEENKQKTDVHYRSLDGEGNFNWRFVFPFDYLPAEQLCIVAKKEHFWSIDQTEFRVPPRLIIQIWDNDKFSLDDYLGFLELDLHRTIIPAKTSEKCSLDMIPDLKAMDPLKAKTASLFEQRSMKGWWPCYADKDGTRVMAGKVEMTLEVLNEREADERPAGKGRSEPNMNPKLDPPNRPETSFLWFTNPCKTMRFIVWRRFKWVIIGLLLLLILLLFVAVLLYSLPNYLSMKIVRPNA</sequence>
<protein>
    <recommendedName>
        <fullName>Myoferlin</fullName>
    </recommendedName>
    <alternativeName>
        <fullName>Fer-1-like protein 3</fullName>
    </alternativeName>
</protein>
<name>MYOF_MOUSE</name>
<proteinExistence type="evidence at protein level"/>
<organism>
    <name type="scientific">Mus musculus</name>
    <name type="common">Mouse</name>
    <dbReference type="NCBI Taxonomy" id="10090"/>
    <lineage>
        <taxon>Eukaryota</taxon>
        <taxon>Metazoa</taxon>
        <taxon>Chordata</taxon>
        <taxon>Craniata</taxon>
        <taxon>Vertebrata</taxon>
        <taxon>Euteleostomi</taxon>
        <taxon>Mammalia</taxon>
        <taxon>Eutheria</taxon>
        <taxon>Euarchontoglires</taxon>
        <taxon>Glires</taxon>
        <taxon>Rodentia</taxon>
        <taxon>Myomorpha</taxon>
        <taxon>Muroidea</taxon>
        <taxon>Muridae</taxon>
        <taxon>Murinae</taxon>
        <taxon>Mus</taxon>
        <taxon>Mus</taxon>
    </lineage>
</organism>
<evidence type="ECO:0000250" key="1"/>
<evidence type="ECO:0000250" key="2">
    <source>
        <dbReference type="UniProtKB" id="Q9NZM1"/>
    </source>
</evidence>
<evidence type="ECO:0000255" key="3"/>
<evidence type="ECO:0000255" key="4">
    <source>
        <dbReference type="PROSITE-ProRule" id="PRU00041"/>
    </source>
</evidence>
<evidence type="ECO:0000256" key="5">
    <source>
        <dbReference type="SAM" id="MobiDB-lite"/>
    </source>
</evidence>
<evidence type="ECO:0000269" key="6">
    <source>
    </source>
</evidence>
<evidence type="ECO:0000269" key="7">
    <source>
    </source>
</evidence>
<evidence type="ECO:0000269" key="8">
    <source>
    </source>
</evidence>
<evidence type="ECO:0000269" key="9">
    <source>
    </source>
</evidence>
<evidence type="ECO:0000303" key="10">
    <source>
    </source>
</evidence>
<evidence type="ECO:0000303" key="11">
    <source>
    </source>
</evidence>
<evidence type="ECO:0000305" key="12"/>
<evidence type="ECO:0007744" key="13">
    <source>
    </source>
</evidence>
<evidence type="ECO:0007744" key="14">
    <source>
    </source>
</evidence>
<evidence type="ECO:0007744" key="15">
    <source>
    </source>
</evidence>
<keyword id="KW-0007">Acetylation</keyword>
<keyword id="KW-0025">Alternative splicing</keyword>
<keyword id="KW-0106">Calcium</keyword>
<keyword id="KW-1003">Cell membrane</keyword>
<keyword id="KW-0968">Cytoplasmic vesicle</keyword>
<keyword id="KW-0472">Membrane</keyword>
<keyword id="KW-0479">Metal-binding</keyword>
<keyword id="KW-0539">Nucleus</keyword>
<keyword id="KW-0597">Phosphoprotein</keyword>
<keyword id="KW-1185">Reference proteome</keyword>
<keyword id="KW-0677">Repeat</keyword>
<keyword id="KW-0735">Signal-anchor</keyword>
<keyword id="KW-0812">Transmembrane</keyword>
<keyword id="KW-1133">Transmembrane helix</keyword>
<gene>
    <name type="primary">Myof</name>
    <name type="synonym">Fer1l3</name>
    <name type="synonym">Kiaa1207</name>
</gene>
<feature type="chain" id="PRO_0000281646" description="Myoferlin">
    <location>
        <begin position="1"/>
        <end position="2048"/>
    </location>
</feature>
<feature type="topological domain" description="Cytoplasmic" evidence="3">
    <location>
        <begin position="1"/>
        <end position="2012"/>
    </location>
</feature>
<feature type="transmembrane region" description="Helical" evidence="3">
    <location>
        <begin position="2013"/>
        <end position="2033"/>
    </location>
</feature>
<feature type="topological domain" description="Extracellular" evidence="3">
    <location>
        <begin position="2034"/>
        <end position="2048"/>
    </location>
</feature>
<feature type="domain" description="C2 1" evidence="4">
    <location>
        <begin position="1"/>
        <end position="101"/>
    </location>
</feature>
<feature type="domain" description="C2 2" evidence="4">
    <location>
        <begin position="183"/>
        <end position="300"/>
    </location>
</feature>
<feature type="domain" description="C2 3" evidence="4">
    <location>
        <begin position="339"/>
        <end position="475"/>
    </location>
</feature>
<feature type="domain" description="C2 4" evidence="4">
    <location>
        <begin position="1110"/>
        <end position="1238"/>
    </location>
</feature>
<feature type="domain" description="C2 5" evidence="4">
    <location>
        <begin position="1269"/>
        <end position="1397"/>
    </location>
</feature>
<feature type="domain" description="C2 6" evidence="4">
    <location>
        <begin position="1523"/>
        <end position="1641"/>
    </location>
</feature>
<feature type="domain" description="C2 7" evidence="4">
    <location>
        <begin position="1759"/>
        <end position="1907"/>
    </location>
</feature>
<feature type="region of interest" description="Disordered" evidence="5">
    <location>
        <begin position="124"/>
        <end position="176"/>
    </location>
</feature>
<feature type="region of interest" description="Necessary for interaction with EHD2" evidence="1">
    <location>
        <begin position="186"/>
        <end position="281"/>
    </location>
</feature>
<feature type="region of interest" description="Disordered" evidence="5">
    <location>
        <begin position="1964"/>
        <end position="1986"/>
    </location>
</feature>
<feature type="compositionally biased region" description="Acidic residues" evidence="5">
    <location>
        <begin position="144"/>
        <end position="156"/>
    </location>
</feature>
<feature type="compositionally biased region" description="Basic and acidic residues" evidence="5">
    <location>
        <begin position="1964"/>
        <end position="1975"/>
    </location>
</feature>
<feature type="binding site" evidence="4">
    <location>
        <position position="390"/>
    </location>
    <ligand>
        <name>Ca(2+)</name>
        <dbReference type="ChEBI" id="CHEBI:29108"/>
        <label>1</label>
    </ligand>
</feature>
<feature type="binding site" evidence="4">
    <location>
        <position position="390"/>
    </location>
    <ligand>
        <name>Ca(2+)</name>
        <dbReference type="ChEBI" id="CHEBI:29108"/>
        <label>2</label>
    </ligand>
</feature>
<feature type="binding site" evidence="4">
    <location>
        <position position="396"/>
    </location>
    <ligand>
        <name>Ca(2+)</name>
        <dbReference type="ChEBI" id="CHEBI:29108"/>
        <label>1</label>
    </ligand>
</feature>
<feature type="binding site" evidence="4">
    <location>
        <position position="444"/>
    </location>
    <ligand>
        <name>Ca(2+)</name>
        <dbReference type="ChEBI" id="CHEBI:29108"/>
        <label>1</label>
    </ligand>
</feature>
<feature type="binding site" evidence="4">
    <location>
        <position position="444"/>
    </location>
    <ligand>
        <name>Ca(2+)</name>
        <dbReference type="ChEBI" id="CHEBI:29108"/>
        <label>2</label>
    </ligand>
</feature>
<feature type="binding site" evidence="4">
    <location>
        <position position="446"/>
    </location>
    <ligand>
        <name>Ca(2+)</name>
        <dbReference type="ChEBI" id="CHEBI:29108"/>
        <label>1</label>
    </ligand>
</feature>
<feature type="binding site" evidence="4">
    <location>
        <position position="446"/>
    </location>
    <ligand>
        <name>Ca(2+)</name>
        <dbReference type="ChEBI" id="CHEBI:29108"/>
        <label>2</label>
    </ligand>
</feature>
<feature type="binding site" evidence="4">
    <location>
        <position position="452"/>
    </location>
    <ligand>
        <name>Ca(2+)</name>
        <dbReference type="ChEBI" id="CHEBI:29108"/>
        <label>2</label>
    </ligand>
</feature>
<feature type="binding site" evidence="4">
    <location>
        <position position="1142"/>
    </location>
    <ligand>
        <name>Ca(2+)</name>
        <dbReference type="ChEBI" id="CHEBI:29108"/>
        <label>3</label>
    </ligand>
</feature>
<feature type="binding site" evidence="4">
    <location>
        <position position="1148"/>
    </location>
    <ligand>
        <name>Ca(2+)</name>
        <dbReference type="ChEBI" id="CHEBI:29108"/>
        <label>3</label>
    </ligand>
</feature>
<feature type="binding site" evidence="4">
    <location>
        <position position="1204"/>
    </location>
    <ligand>
        <name>Ca(2+)</name>
        <dbReference type="ChEBI" id="CHEBI:29108"/>
        <label>3</label>
    </ligand>
</feature>
<feature type="binding site" evidence="4">
    <location>
        <position position="1206"/>
    </location>
    <ligand>
        <name>Ca(2+)</name>
        <dbReference type="ChEBI" id="CHEBI:29108"/>
        <label>3</label>
    </ligand>
</feature>
<feature type="binding site" evidence="4">
    <location>
        <position position="1556"/>
    </location>
    <ligand>
        <name>Ca(2+)</name>
        <dbReference type="ChEBI" id="CHEBI:29108"/>
        <label>4</label>
    </ligand>
</feature>
<feature type="binding site" evidence="4">
    <location>
        <position position="1562"/>
    </location>
    <ligand>
        <name>Ca(2+)</name>
        <dbReference type="ChEBI" id="CHEBI:29108"/>
        <label>4</label>
    </ligand>
</feature>
<feature type="binding site" evidence="4">
    <location>
        <position position="1611"/>
    </location>
    <ligand>
        <name>Ca(2+)</name>
        <dbReference type="ChEBI" id="CHEBI:29108"/>
        <label>4</label>
    </ligand>
</feature>
<feature type="binding site" evidence="4">
    <location>
        <position position="1613"/>
    </location>
    <ligand>
        <name>Ca(2+)</name>
        <dbReference type="ChEBI" id="CHEBI:29108"/>
        <label>4</label>
    </ligand>
</feature>
<feature type="binding site" evidence="4">
    <location>
        <position position="1878"/>
    </location>
    <ligand>
        <name>Ca(2+)</name>
        <dbReference type="ChEBI" id="CHEBI:29108"/>
        <label>5</label>
    </ligand>
</feature>
<feature type="binding site" evidence="4">
    <location>
        <position position="1881"/>
    </location>
    <ligand>
        <name>Ca(2+)</name>
        <dbReference type="ChEBI" id="CHEBI:29108"/>
        <label>5</label>
    </ligand>
</feature>
<feature type="binding site" evidence="4">
    <location>
        <position position="1884"/>
    </location>
    <ligand>
        <name>Ca(2+)</name>
        <dbReference type="ChEBI" id="CHEBI:29108"/>
        <label>5</label>
    </ligand>
</feature>
<feature type="modified residue" description="Phosphoserine" evidence="14">
    <location>
        <position position="170"/>
    </location>
</feature>
<feature type="modified residue" description="Phosphoserine" evidence="13 14">
    <location>
        <position position="174"/>
    </location>
</feature>
<feature type="modified residue" description="N6-acetyllysine" evidence="15">
    <location>
        <position position="540"/>
    </location>
</feature>
<feature type="modified residue" description="N6-acetyllysine" evidence="2">
    <location>
        <position position="871"/>
    </location>
</feature>
<feature type="modified residue" description="N6-acetyllysine" evidence="15">
    <location>
        <position position="1494"/>
    </location>
</feature>
<feature type="splice variant" id="VSP_024013" description="In isoform 3." evidence="11">
    <original>IDVGFVYDEPG</original>
    <variation>VSDSSILLSMI</variation>
    <location>
        <begin position="282"/>
        <end position="292"/>
    </location>
</feature>
<feature type="splice variant" id="VSP_024014" description="In isoform 3." evidence="11">
    <location>
        <begin position="293"/>
        <end position="2048"/>
    </location>
</feature>
<feature type="splice variant" id="VSP_024015" description="In isoform 2." evidence="11">
    <original>E</original>
    <variation>EDFSSSGAGAASYT</variation>
    <location>
        <position position="472"/>
    </location>
</feature>
<feature type="splice variant" id="VSP_024016" description="In isoform 2." evidence="11">
    <original>LLT</original>
    <variation>SPR</variation>
    <location>
        <begin position="906"/>
        <end position="908"/>
    </location>
</feature>
<feature type="splice variant" id="VSP_024017" description="In isoform 2." evidence="11">
    <location>
        <begin position="909"/>
        <end position="2048"/>
    </location>
</feature>
<feature type="splice variant" id="VSP_035934" description="In isoform 4." evidence="10">
    <location>
        <begin position="1346"/>
        <end position="1570"/>
    </location>
</feature>
<feature type="mutagenesis site" description="Reduces calcium-sensitive phospholipid binding." evidence="6">
    <original>I</original>
    <variation>D</variation>
    <location>
        <position position="67"/>
    </location>
</feature>
<feature type="sequence conflict" description="In Ref. 2; BAC39820." evidence="12" ref="2">
    <original>K</original>
    <variation>E</variation>
    <location>
        <position position="186"/>
    </location>
</feature>
<feature type="sequence conflict" description="In Ref. 2; BAC36043." evidence="12" ref="2">
    <original>G</original>
    <variation>R</variation>
    <location>
        <position position="1322"/>
    </location>
</feature>